<organism>
    <name type="scientific">Levilactobacillus brevis (strain ATCC 367 / BCRC 12310 / CIP 105137 / JCM 1170 / LMG 11437 / NCIMB 947 / NCTC 947)</name>
    <name type="common">Lactobacillus brevis</name>
    <dbReference type="NCBI Taxonomy" id="387344"/>
    <lineage>
        <taxon>Bacteria</taxon>
        <taxon>Bacillati</taxon>
        <taxon>Bacillota</taxon>
        <taxon>Bacilli</taxon>
        <taxon>Lactobacillales</taxon>
        <taxon>Lactobacillaceae</taxon>
        <taxon>Levilactobacillus</taxon>
    </lineage>
</organism>
<name>RL36_LEVBA</name>
<protein>
    <recommendedName>
        <fullName evidence="1">Large ribosomal subunit protein bL36</fullName>
    </recommendedName>
    <alternativeName>
        <fullName evidence="2">50S ribosomal protein L36</fullName>
    </alternativeName>
</protein>
<gene>
    <name evidence="1" type="primary">rpmJ</name>
    <name type="ordered locus">LVIS_1667</name>
</gene>
<sequence>MKVRPSVKPMCEHCKVIKRKGRVMVICSANPKHKQRQGK</sequence>
<dbReference type="EMBL" id="CP000416">
    <property type="protein sequence ID" value="ABJ64742.1"/>
    <property type="molecule type" value="Genomic_DNA"/>
</dbReference>
<dbReference type="RefSeq" id="WP_011668476.1">
    <property type="nucleotide sequence ID" value="NC_008497.1"/>
</dbReference>
<dbReference type="SMR" id="Q03PY0"/>
<dbReference type="STRING" id="387344.LVIS_1667"/>
<dbReference type="GeneID" id="97414345"/>
<dbReference type="KEGG" id="lbr:LVIS_1667"/>
<dbReference type="eggNOG" id="COG0257">
    <property type="taxonomic scope" value="Bacteria"/>
</dbReference>
<dbReference type="HOGENOM" id="CLU_135723_6_2_9"/>
<dbReference type="Proteomes" id="UP000001652">
    <property type="component" value="Chromosome"/>
</dbReference>
<dbReference type="GO" id="GO:0005737">
    <property type="term" value="C:cytoplasm"/>
    <property type="evidence" value="ECO:0007669"/>
    <property type="project" value="UniProtKB-ARBA"/>
</dbReference>
<dbReference type="GO" id="GO:1990904">
    <property type="term" value="C:ribonucleoprotein complex"/>
    <property type="evidence" value="ECO:0007669"/>
    <property type="project" value="UniProtKB-KW"/>
</dbReference>
<dbReference type="GO" id="GO:0005840">
    <property type="term" value="C:ribosome"/>
    <property type="evidence" value="ECO:0007669"/>
    <property type="project" value="UniProtKB-KW"/>
</dbReference>
<dbReference type="GO" id="GO:0003735">
    <property type="term" value="F:structural constituent of ribosome"/>
    <property type="evidence" value="ECO:0007669"/>
    <property type="project" value="InterPro"/>
</dbReference>
<dbReference type="GO" id="GO:0006412">
    <property type="term" value="P:translation"/>
    <property type="evidence" value="ECO:0007669"/>
    <property type="project" value="UniProtKB-UniRule"/>
</dbReference>
<dbReference type="HAMAP" id="MF_00251">
    <property type="entry name" value="Ribosomal_bL36"/>
    <property type="match status" value="1"/>
</dbReference>
<dbReference type="InterPro" id="IPR000473">
    <property type="entry name" value="Ribosomal_bL36"/>
</dbReference>
<dbReference type="InterPro" id="IPR035977">
    <property type="entry name" value="Ribosomal_bL36_sp"/>
</dbReference>
<dbReference type="NCBIfam" id="TIGR01022">
    <property type="entry name" value="rpmJ_bact"/>
    <property type="match status" value="1"/>
</dbReference>
<dbReference type="PANTHER" id="PTHR42888">
    <property type="entry name" value="50S RIBOSOMAL PROTEIN L36, CHLOROPLASTIC"/>
    <property type="match status" value="1"/>
</dbReference>
<dbReference type="PANTHER" id="PTHR42888:SF1">
    <property type="entry name" value="LARGE RIBOSOMAL SUBUNIT PROTEIN BL36C"/>
    <property type="match status" value="1"/>
</dbReference>
<dbReference type="Pfam" id="PF00444">
    <property type="entry name" value="Ribosomal_L36"/>
    <property type="match status" value="1"/>
</dbReference>
<dbReference type="SUPFAM" id="SSF57840">
    <property type="entry name" value="Ribosomal protein L36"/>
    <property type="match status" value="1"/>
</dbReference>
<dbReference type="PROSITE" id="PS00828">
    <property type="entry name" value="RIBOSOMAL_L36"/>
    <property type="match status" value="1"/>
</dbReference>
<comment type="similarity">
    <text evidence="1">Belongs to the bacterial ribosomal protein bL36 family.</text>
</comment>
<proteinExistence type="inferred from homology"/>
<feature type="chain" id="PRO_0000302221" description="Large ribosomal subunit protein bL36">
    <location>
        <begin position="1"/>
        <end position="39"/>
    </location>
</feature>
<reference key="1">
    <citation type="journal article" date="2006" name="Proc. Natl. Acad. Sci. U.S.A.">
        <title>Comparative genomics of the lactic acid bacteria.</title>
        <authorList>
            <person name="Makarova K.S."/>
            <person name="Slesarev A."/>
            <person name="Wolf Y.I."/>
            <person name="Sorokin A."/>
            <person name="Mirkin B."/>
            <person name="Koonin E.V."/>
            <person name="Pavlov A."/>
            <person name="Pavlova N."/>
            <person name="Karamychev V."/>
            <person name="Polouchine N."/>
            <person name="Shakhova V."/>
            <person name="Grigoriev I."/>
            <person name="Lou Y."/>
            <person name="Rohksar D."/>
            <person name="Lucas S."/>
            <person name="Huang K."/>
            <person name="Goodstein D.M."/>
            <person name="Hawkins T."/>
            <person name="Plengvidhya V."/>
            <person name="Welker D."/>
            <person name="Hughes J."/>
            <person name="Goh Y."/>
            <person name="Benson A."/>
            <person name="Baldwin K."/>
            <person name="Lee J.-H."/>
            <person name="Diaz-Muniz I."/>
            <person name="Dosti B."/>
            <person name="Smeianov V."/>
            <person name="Wechter W."/>
            <person name="Barabote R."/>
            <person name="Lorca G."/>
            <person name="Altermann E."/>
            <person name="Barrangou R."/>
            <person name="Ganesan B."/>
            <person name="Xie Y."/>
            <person name="Rawsthorne H."/>
            <person name="Tamir D."/>
            <person name="Parker C."/>
            <person name="Breidt F."/>
            <person name="Broadbent J.R."/>
            <person name="Hutkins R."/>
            <person name="O'Sullivan D."/>
            <person name="Steele J."/>
            <person name="Unlu G."/>
            <person name="Saier M.H. Jr."/>
            <person name="Klaenhammer T."/>
            <person name="Richardson P."/>
            <person name="Kozyavkin S."/>
            <person name="Weimer B.C."/>
            <person name="Mills D.A."/>
        </authorList>
    </citation>
    <scope>NUCLEOTIDE SEQUENCE [LARGE SCALE GENOMIC DNA]</scope>
    <source>
        <strain>ATCC 367 / BCRC 12310 / CIP 105137 / JCM 1170 / LMG 11437 / NCIMB 947 / NCTC 947</strain>
    </source>
</reference>
<accession>Q03PY0</accession>
<keyword id="KW-1185">Reference proteome</keyword>
<keyword id="KW-0687">Ribonucleoprotein</keyword>
<keyword id="KW-0689">Ribosomal protein</keyword>
<evidence type="ECO:0000255" key="1">
    <source>
        <dbReference type="HAMAP-Rule" id="MF_00251"/>
    </source>
</evidence>
<evidence type="ECO:0000305" key="2"/>